<proteinExistence type="inferred from homology"/>
<comment type="function">
    <text evidence="1">Ferredoxins are iron-sulfur proteins that transfer electrons in a wide variety of metabolic reactions. This ferredoxin is required for nitrogen fixation (By similarity).</text>
</comment>
<comment type="cofactor">
    <cofactor evidence="3">
        <name>[2Fe-2S] cluster</name>
        <dbReference type="ChEBI" id="CHEBI:190135"/>
    </cofactor>
    <text evidence="3">Binds 1 [2Fe-2S] cluster.</text>
</comment>
<comment type="similarity">
    <text evidence="3">Belongs to the 2Fe2S plant-type ferredoxin family.</text>
</comment>
<protein>
    <recommendedName>
        <fullName>Ferredoxin-4</fullName>
    </recommendedName>
    <alternativeName>
        <fullName>Ferredoxin IV</fullName>
        <shortName>FdIV</shortName>
    </alternativeName>
    <alternativeName>
        <fullName>Ferredoxin, plant-type</fullName>
    </alternativeName>
</protein>
<sequence length="95" mass="10163">MDKATLTFTDVSITVNVPTGTRIIEMSEKVGSGITYGCREGECGTCMTHILEGSENLSEPTALEMRVLEENLGGKDDRLACQCRVLGGAVKVRPA</sequence>
<name>FER4_RHOCA</name>
<gene>
    <name type="primary">fdxC</name>
    <name type="synonym">ptfA</name>
</gene>
<accession>P0CY92</accession>
<accession>P16022</accession>
<dbReference type="EMBL" id="M59855">
    <property type="protein sequence ID" value="AAA26109.1"/>
    <property type="molecule type" value="Genomic_DNA"/>
</dbReference>
<dbReference type="EMBL" id="X72888">
    <property type="protein sequence ID" value="CAA51403.1"/>
    <property type="molecule type" value="Genomic_DNA"/>
</dbReference>
<dbReference type="PIR" id="S08393">
    <property type="entry name" value="FERFNC"/>
</dbReference>
<dbReference type="RefSeq" id="WP_013068981.1">
    <property type="nucleotide sequence ID" value="NZ_VIBE01000016.1"/>
</dbReference>
<dbReference type="SMR" id="P0CY92"/>
<dbReference type="GeneID" id="31492065"/>
<dbReference type="OMA" id="VPFACTE"/>
<dbReference type="GO" id="GO:0051537">
    <property type="term" value="F:2 iron, 2 sulfur cluster binding"/>
    <property type="evidence" value="ECO:0007669"/>
    <property type="project" value="UniProtKB-KW"/>
</dbReference>
<dbReference type="GO" id="GO:0046872">
    <property type="term" value="F:metal ion binding"/>
    <property type="evidence" value="ECO:0007669"/>
    <property type="project" value="UniProtKB-KW"/>
</dbReference>
<dbReference type="GO" id="GO:0009399">
    <property type="term" value="P:nitrogen fixation"/>
    <property type="evidence" value="ECO:0007669"/>
    <property type="project" value="UniProtKB-KW"/>
</dbReference>
<dbReference type="CDD" id="cd00207">
    <property type="entry name" value="fer2"/>
    <property type="match status" value="1"/>
</dbReference>
<dbReference type="Gene3D" id="3.10.20.30">
    <property type="match status" value="1"/>
</dbReference>
<dbReference type="InterPro" id="IPR036010">
    <property type="entry name" value="2Fe-2S_ferredoxin-like_sf"/>
</dbReference>
<dbReference type="InterPro" id="IPR001041">
    <property type="entry name" value="2Fe-2S_ferredoxin-type"/>
</dbReference>
<dbReference type="InterPro" id="IPR006058">
    <property type="entry name" value="2Fe2S_fd_BS"/>
</dbReference>
<dbReference type="InterPro" id="IPR012675">
    <property type="entry name" value="Beta-grasp_dom_sf"/>
</dbReference>
<dbReference type="Pfam" id="PF00111">
    <property type="entry name" value="Fer2"/>
    <property type="match status" value="1"/>
</dbReference>
<dbReference type="SUPFAM" id="SSF54292">
    <property type="entry name" value="2Fe-2S ferredoxin-like"/>
    <property type="match status" value="1"/>
</dbReference>
<dbReference type="PROSITE" id="PS00197">
    <property type="entry name" value="2FE2S_FER_1"/>
    <property type="match status" value="1"/>
</dbReference>
<dbReference type="PROSITE" id="PS51085">
    <property type="entry name" value="2FE2S_FER_2"/>
    <property type="match status" value="1"/>
</dbReference>
<reference key="1">
    <citation type="journal article" date="1991" name="J. Biol. Chem.">
        <title>A new [2Fe-2S] ferredoxin from Rhodobacter capsulatus. Coexpression with a 2[4Fe-4S] ferredoxin in Escherichia coli.</title>
        <authorList>
            <person name="Grabau C."/>
            <person name="Schatt E."/>
            <person name="Jouanneau Y."/>
            <person name="Vignais P.M."/>
        </authorList>
    </citation>
    <scope>NUCLEOTIDE SEQUENCE [GENOMIC DNA]</scope>
    <source>
        <strain>ATCC 33303 / B10</strain>
    </source>
</reference>
<reference key="2">
    <citation type="journal article" date="1993" name="Mol. Gen. Genet.">
        <title>Identification of a new class of nitrogen fixation genes in Rhodobacter capsulatus: a putative membrane complex involved in electron transport to nitrogenase.</title>
        <authorList>
            <person name="Schmehl M."/>
            <person name="Jahn A."/>
            <person name="Meyer zu Vilsendorf A."/>
            <person name="Hennecke S."/>
            <person name="Masepohl B."/>
            <person name="Schuppler M."/>
            <person name="Marxer M."/>
            <person name="Oelze J."/>
            <person name="Klipp W."/>
        </authorList>
    </citation>
    <scope>NUCLEOTIDE SEQUENCE [GENOMIC DNA]</scope>
    <source>
        <strain>ATCC 33303 / B10</strain>
    </source>
</reference>
<organism>
    <name type="scientific">Rhodobacter capsulatus</name>
    <name type="common">Rhodopseudomonas capsulata</name>
    <dbReference type="NCBI Taxonomy" id="1061"/>
    <lineage>
        <taxon>Bacteria</taxon>
        <taxon>Pseudomonadati</taxon>
        <taxon>Pseudomonadota</taxon>
        <taxon>Alphaproteobacteria</taxon>
        <taxon>Rhodobacterales</taxon>
        <taxon>Rhodobacter group</taxon>
        <taxon>Rhodobacter</taxon>
    </lineage>
</organism>
<keyword id="KW-0001">2Fe-2S</keyword>
<keyword id="KW-0249">Electron transport</keyword>
<keyword id="KW-0408">Iron</keyword>
<keyword id="KW-0411">Iron-sulfur</keyword>
<keyword id="KW-0479">Metal-binding</keyword>
<keyword id="KW-0535">Nitrogen fixation</keyword>
<keyword id="KW-0813">Transport</keyword>
<feature type="chain" id="PRO_0000189389" description="Ferredoxin-4">
    <location>
        <begin position="1"/>
        <end position="95"/>
    </location>
</feature>
<feature type="domain" description="2Fe-2S ferredoxin-type" evidence="2">
    <location>
        <begin position="2"/>
        <end position="95"/>
    </location>
</feature>
<feature type="binding site" evidence="2">
    <location>
        <position position="38"/>
    </location>
    <ligand>
        <name>[2Fe-2S] cluster</name>
        <dbReference type="ChEBI" id="CHEBI:190135"/>
    </ligand>
</feature>
<feature type="binding site" evidence="2">
    <location>
        <position position="43"/>
    </location>
    <ligand>
        <name>[2Fe-2S] cluster</name>
        <dbReference type="ChEBI" id="CHEBI:190135"/>
    </ligand>
</feature>
<feature type="binding site" evidence="2">
    <location>
        <position position="46"/>
    </location>
    <ligand>
        <name>[2Fe-2S] cluster</name>
        <dbReference type="ChEBI" id="CHEBI:190135"/>
    </ligand>
</feature>
<feature type="binding site" evidence="2">
    <location>
        <position position="81"/>
    </location>
    <ligand>
        <name>[2Fe-2S] cluster</name>
        <dbReference type="ChEBI" id="CHEBI:190135"/>
    </ligand>
</feature>
<evidence type="ECO:0000250" key="1"/>
<evidence type="ECO:0000255" key="2">
    <source>
        <dbReference type="PROSITE-ProRule" id="PRU00465"/>
    </source>
</evidence>
<evidence type="ECO:0000305" key="3"/>